<protein>
    <recommendedName>
        <fullName evidence="1">Lipid A biosynthesis acyltransferase 1</fullName>
        <ecNumber evidence="1">2.3.1.243</ecNumber>
    </recommendedName>
    <alternativeName>
        <fullName evidence="1">Kdo(2)-lauroyl-lipid IV(A) acyltransferase 1</fullName>
    </alternativeName>
</protein>
<proteinExistence type="evidence at transcript level"/>
<name>LPXM1_SHIFL</name>
<gene>
    <name evidence="1" type="primary">lpxM1</name>
    <name type="synonym">msbB</name>
    <name evidence="4 5" type="synonym">msbB1</name>
    <name type="ordered locus">SF1865</name>
    <name type="ordered locus">S1931</name>
</gene>
<sequence length="323" mass="37410">METKKNNSEYIPEFDKSFRHPRYWGAWLGVAAMAGIALTPPKFRDPILARLGRFAGRLGKSSRRRALINLSLCFPERSEAEREAIVDEMFATAPQAMAMMAELAIRGPEKIQPRVGWQGLEIIEEMRRNNEKVIFLVPHGWAVDIPAMLMASQGQKMAAMFHNQGNPVFDYVWNTVRRRFGGRLHARNDGIKPFIQSVRQGYWGYYLPDQDHGPEHSEFVDFFATYKATLPAIGRLMKVCRARVVPLFPIYDGKTHRLTIQVRPPMDDLLEADDHTIERRMNEEVEIFVGPRPEQYTWILKLLKTRKPGEIQPYKRKDLYPIK</sequence>
<dbReference type="EC" id="2.3.1.243" evidence="1"/>
<dbReference type="EMBL" id="AE005674">
    <property type="protein sequence ID" value="AAN43422.1"/>
    <property type="molecule type" value="Genomic_DNA"/>
</dbReference>
<dbReference type="EMBL" id="AE014073">
    <property type="protein sequence ID" value="AAP17246.1"/>
    <property type="molecule type" value="Genomic_DNA"/>
</dbReference>
<dbReference type="RefSeq" id="NP_707715.1">
    <property type="nucleotide sequence ID" value="NC_004337.2"/>
</dbReference>
<dbReference type="RefSeq" id="WP_000448385.1">
    <property type="nucleotide sequence ID" value="NZ_WPGW01000041.1"/>
</dbReference>
<dbReference type="SMR" id="P59198"/>
<dbReference type="STRING" id="198214.SF1865"/>
<dbReference type="PaxDb" id="198214-SF1865"/>
<dbReference type="GeneID" id="1027792"/>
<dbReference type="KEGG" id="sfl:SF1865"/>
<dbReference type="KEGG" id="sfx:S1931"/>
<dbReference type="PATRIC" id="fig|198214.7.peg.2223"/>
<dbReference type="HOGENOM" id="CLU_049421_1_0_6"/>
<dbReference type="UniPathway" id="UPA00030"/>
<dbReference type="UniPathway" id="UPA00360">
    <property type="reaction ID" value="UER00486"/>
</dbReference>
<dbReference type="Proteomes" id="UP000001006">
    <property type="component" value="Chromosome"/>
</dbReference>
<dbReference type="Proteomes" id="UP000002673">
    <property type="component" value="Chromosome"/>
</dbReference>
<dbReference type="GO" id="GO:0009276">
    <property type="term" value="C:Gram-negative-bacterium-type cell wall"/>
    <property type="evidence" value="ECO:0007669"/>
    <property type="project" value="InterPro"/>
</dbReference>
<dbReference type="GO" id="GO:0005886">
    <property type="term" value="C:plasma membrane"/>
    <property type="evidence" value="ECO:0007669"/>
    <property type="project" value="UniProtKB-SubCell"/>
</dbReference>
<dbReference type="GO" id="GO:0016747">
    <property type="term" value="F:acyltransferase activity, transferring groups other than amino-acyl groups"/>
    <property type="evidence" value="ECO:0007669"/>
    <property type="project" value="InterPro"/>
</dbReference>
<dbReference type="GO" id="GO:0036104">
    <property type="term" value="P:Kdo2-lipid A biosynthetic process"/>
    <property type="evidence" value="ECO:0007669"/>
    <property type="project" value="UniProtKB-UniRule"/>
</dbReference>
<dbReference type="GO" id="GO:0009103">
    <property type="term" value="P:lipopolysaccharide biosynthetic process"/>
    <property type="evidence" value="ECO:0007669"/>
    <property type="project" value="UniProtKB-UniRule"/>
</dbReference>
<dbReference type="CDD" id="cd07984">
    <property type="entry name" value="LPLAT_LABLAT-like"/>
    <property type="match status" value="1"/>
</dbReference>
<dbReference type="HAMAP" id="MF_01944">
    <property type="entry name" value="Lipid_A_LpxM"/>
    <property type="match status" value="1"/>
</dbReference>
<dbReference type="InterPro" id="IPR004960">
    <property type="entry name" value="LipA_acyltrans"/>
</dbReference>
<dbReference type="InterPro" id="IPR011921">
    <property type="entry name" value="Lipid_A_MsbB"/>
</dbReference>
<dbReference type="NCBIfam" id="TIGR02208">
    <property type="entry name" value="lipid_A_msbB"/>
    <property type="match status" value="1"/>
</dbReference>
<dbReference type="NCBIfam" id="NF006507">
    <property type="entry name" value="PRK08943.1"/>
    <property type="match status" value="1"/>
</dbReference>
<dbReference type="PANTHER" id="PTHR30606">
    <property type="entry name" value="LIPID A BIOSYNTHESIS LAUROYL ACYLTRANSFERASE"/>
    <property type="match status" value="1"/>
</dbReference>
<dbReference type="PANTHER" id="PTHR30606:SF4">
    <property type="entry name" value="LIPID A BIOSYNTHESIS MYRISTOYLTRANSFERASE"/>
    <property type="match status" value="1"/>
</dbReference>
<dbReference type="Pfam" id="PF03279">
    <property type="entry name" value="Lip_A_acyltrans"/>
    <property type="match status" value="1"/>
</dbReference>
<dbReference type="PIRSF" id="PIRSF026649">
    <property type="entry name" value="MsbB"/>
    <property type="match status" value="1"/>
</dbReference>
<keyword id="KW-0012">Acyltransferase</keyword>
<keyword id="KW-0997">Cell inner membrane</keyword>
<keyword id="KW-1003">Cell membrane</keyword>
<keyword id="KW-0448">Lipopolysaccharide biosynthesis</keyword>
<keyword id="KW-0472">Membrane</keyword>
<keyword id="KW-1185">Reference proteome</keyword>
<keyword id="KW-0808">Transferase</keyword>
<keyword id="KW-0812">Transmembrane</keyword>
<keyword id="KW-1133">Transmembrane helix</keyword>
<comment type="function">
    <text evidence="1">Catalyzes the transfer of an acyl chain from an acyl-[acyl-carrier-protein] (ACP) to a Kdo(2)-(acyl)-lipid IV(A) to form a Kdo(2)-lipid A.</text>
</comment>
<comment type="catalytic activity">
    <reaction evidence="1">
        <text>an alpha-Kdo-(2-&gt;4)-alpha-Kdo-(2-&gt;6)-(acyl)-lipid IVA + a fatty acyl-[ACP] = an alpha-Kdo-(2-&gt;4)-alpha-Kdo-(2-&gt;6)-lipid A + holo-[ACP]</text>
        <dbReference type="Rhea" id="RHEA:69400"/>
        <dbReference type="Rhea" id="RHEA-COMP:9685"/>
        <dbReference type="Rhea" id="RHEA-COMP:14125"/>
        <dbReference type="ChEBI" id="CHEBI:64479"/>
        <dbReference type="ChEBI" id="CHEBI:138651"/>
        <dbReference type="ChEBI" id="CHEBI:176430"/>
        <dbReference type="ChEBI" id="CHEBI:176431"/>
        <dbReference type="EC" id="2.3.1.243"/>
    </reaction>
</comment>
<comment type="pathway">
    <text evidence="1">Glycolipid biosynthesis; KDO(2)-lipid A biosynthesis; KDO(2)-lipid A from CMP-3-deoxy-D-manno-octulosonate and lipid IV(A): step 4/4.</text>
</comment>
<comment type="pathway">
    <text evidence="1">Bacterial outer membrane biogenesis; lipopolysaccharide biosynthesis.</text>
</comment>
<comment type="subcellular location">
    <subcellularLocation>
        <location evidence="1">Cell inner membrane</location>
        <topology evidence="1">Single-pass membrane protein</topology>
    </subcellularLocation>
</comment>
<comment type="induction">
    <text evidence="3">Active under both limited and replete magnesium growth conditions and is independent of the PhoP/PhoQ two-component system.</text>
</comment>
<comment type="disruption phenotype">
    <text evidence="2">A msbB1/msbB2 double mutant is impaired in its capacity to cause TNF-alpha production by human monocytes and to cause rupture and inflammatory destruction of the epithelial barrier in the rabbit ligated intestinal loop model of shigellosis. Mutants have no defect in their ability to enter into host epithelial cells.</text>
</comment>
<comment type="similarity">
    <text evidence="1">Belongs to the LpxL/LpxM/LpxP family. LpxM subfamily.</text>
</comment>
<feature type="chain" id="PRO_0000201779" description="Lipid A biosynthesis acyltransferase 1">
    <location>
        <begin position="1"/>
        <end position="323"/>
    </location>
</feature>
<feature type="transmembrane region" description="Helical" evidence="1">
    <location>
        <begin position="23"/>
        <end position="43"/>
    </location>
</feature>
<feature type="short sequence motif" description="HXXXXD motif" evidence="1">
    <location>
        <begin position="139"/>
        <end position="144"/>
    </location>
</feature>
<evidence type="ECO:0000255" key="1">
    <source>
        <dbReference type="HAMAP-Rule" id="MF_01944"/>
    </source>
</evidence>
<evidence type="ECO:0000269" key="2">
    <source>
    </source>
</evidence>
<evidence type="ECO:0000269" key="3">
    <source>
    </source>
</evidence>
<evidence type="ECO:0000303" key="4">
    <source>
    </source>
</evidence>
<evidence type="ECO:0000303" key="5">
    <source>
    </source>
</evidence>
<reference key="1">
    <citation type="journal article" date="2002" name="Nucleic Acids Res.">
        <title>Genome sequence of Shigella flexneri 2a: insights into pathogenicity through comparison with genomes of Escherichia coli K12 and O157.</title>
        <authorList>
            <person name="Jin Q."/>
            <person name="Yuan Z."/>
            <person name="Xu J."/>
            <person name="Wang Y."/>
            <person name="Shen Y."/>
            <person name="Lu W."/>
            <person name="Wang J."/>
            <person name="Liu H."/>
            <person name="Yang J."/>
            <person name="Yang F."/>
            <person name="Zhang X."/>
            <person name="Zhang J."/>
            <person name="Yang G."/>
            <person name="Wu H."/>
            <person name="Qu D."/>
            <person name="Dong J."/>
            <person name="Sun L."/>
            <person name="Xue Y."/>
            <person name="Zhao A."/>
            <person name="Gao Y."/>
            <person name="Zhu J."/>
            <person name="Kan B."/>
            <person name="Ding K."/>
            <person name="Chen S."/>
            <person name="Cheng H."/>
            <person name="Yao Z."/>
            <person name="He B."/>
            <person name="Chen R."/>
            <person name="Ma D."/>
            <person name="Qiang B."/>
            <person name="Wen Y."/>
            <person name="Hou Y."/>
            <person name="Yu J."/>
        </authorList>
    </citation>
    <scope>NUCLEOTIDE SEQUENCE [LARGE SCALE GENOMIC DNA]</scope>
    <source>
        <strain>301 / Serotype 2a</strain>
    </source>
</reference>
<reference key="2">
    <citation type="journal article" date="2003" name="Infect. Immun.">
        <title>Complete genome sequence and comparative genomics of Shigella flexneri serotype 2a strain 2457T.</title>
        <authorList>
            <person name="Wei J."/>
            <person name="Goldberg M.B."/>
            <person name="Burland V."/>
            <person name="Venkatesan M.M."/>
            <person name="Deng W."/>
            <person name="Fournier G."/>
            <person name="Mayhew G.F."/>
            <person name="Plunkett G. III"/>
            <person name="Rose D.J."/>
            <person name="Darling A."/>
            <person name="Mau B."/>
            <person name="Perna N.T."/>
            <person name="Payne S.M."/>
            <person name="Runyen-Janecky L.J."/>
            <person name="Zhou S."/>
            <person name="Schwartz D.C."/>
            <person name="Blattner F.R."/>
        </authorList>
    </citation>
    <scope>NUCLEOTIDE SEQUENCE [LARGE SCALE GENOMIC DNA]</scope>
    <source>
        <strain>ATCC 700930 / 2457T / Serotype 2a</strain>
    </source>
</reference>
<reference key="3">
    <citation type="journal article" date="2002" name="J. Immunol.">
        <title>Two msbB genes encoding maximal acylation of lipid A are required for invasive Shigella flexneri to mediate inflammatory rupture and destruction of the intestinal epithelium.</title>
        <authorList>
            <person name="D'Hauteville H."/>
            <person name="Khan S."/>
            <person name="Maskell D.J."/>
            <person name="Kussak A."/>
            <person name="Weintraub A."/>
            <person name="Mathison J."/>
            <person name="Ulevitch R.J."/>
            <person name="Wuscher N."/>
            <person name="Parsot C."/>
            <person name="Sansonetti P.J."/>
        </authorList>
    </citation>
    <scope>DISRUPTION PHENOTYPE</scope>
    <source>
        <strain>M90T / Serotype 5a</strain>
    </source>
</reference>
<reference key="4">
    <citation type="journal article" date="2008" name="J. Bacteriol.">
        <title>Differential regulation by magnesium of the two MsbB paralogs of Shigella flexneri.</title>
        <authorList>
            <person name="Goldman S.R."/>
            <person name="Tu Y."/>
            <person name="Goldberg M.B."/>
        </authorList>
    </citation>
    <scope>INDUCTION</scope>
    <source>
        <strain>YSH6000 / Serotype 2a</strain>
    </source>
</reference>
<accession>P59198</accession>
<organism>
    <name type="scientific">Shigella flexneri</name>
    <dbReference type="NCBI Taxonomy" id="623"/>
    <lineage>
        <taxon>Bacteria</taxon>
        <taxon>Pseudomonadati</taxon>
        <taxon>Pseudomonadota</taxon>
        <taxon>Gammaproteobacteria</taxon>
        <taxon>Enterobacterales</taxon>
        <taxon>Enterobacteriaceae</taxon>
        <taxon>Shigella</taxon>
    </lineage>
</organism>